<gene>
    <name type="ordered locus">At4g22214</name>
    <name type="ORF">T10I14.40</name>
</gene>
<feature type="signal peptide" evidence="2">
    <location>
        <begin position="1"/>
        <end position="28"/>
    </location>
</feature>
<feature type="chain" id="PRO_0000379662" description="Defensin-like protein 99">
    <location>
        <begin position="29"/>
        <end position="188"/>
    </location>
</feature>
<feature type="disulfide bond" evidence="1">
    <location>
        <begin position="37"/>
        <end position="95"/>
    </location>
</feature>
<feature type="disulfide bond" evidence="1">
    <location>
        <begin position="45"/>
        <end position="77"/>
    </location>
</feature>
<feature type="disulfide bond" evidence="1">
    <location>
        <begin position="58"/>
        <end position="92"/>
    </location>
</feature>
<feature type="disulfide bond" evidence="1">
    <location>
        <begin position="62"/>
        <end position="94"/>
    </location>
</feature>
<feature type="disulfide bond" evidence="1">
    <location>
        <begin position="123"/>
        <end position="178"/>
    </location>
</feature>
<feature type="disulfide bond" evidence="1">
    <location>
        <begin position="137"/>
        <end position="175"/>
    </location>
</feature>
<feature type="disulfide bond" evidence="1">
    <location>
        <begin position="141"/>
        <end position="177"/>
    </location>
</feature>
<reference key="1">
    <citation type="journal article" date="1999" name="Nature">
        <title>Sequence and analysis of chromosome 4 of the plant Arabidopsis thaliana.</title>
        <authorList>
            <person name="Mayer K.F.X."/>
            <person name="Schueller C."/>
            <person name="Wambutt R."/>
            <person name="Murphy G."/>
            <person name="Volckaert G."/>
            <person name="Pohl T."/>
            <person name="Duesterhoeft A."/>
            <person name="Stiekema W."/>
            <person name="Entian K.-D."/>
            <person name="Terryn N."/>
            <person name="Harris B."/>
            <person name="Ansorge W."/>
            <person name="Brandt P."/>
            <person name="Grivell L.A."/>
            <person name="Rieger M."/>
            <person name="Weichselgartner M."/>
            <person name="de Simone V."/>
            <person name="Obermaier B."/>
            <person name="Mache R."/>
            <person name="Mueller M."/>
            <person name="Kreis M."/>
            <person name="Delseny M."/>
            <person name="Puigdomenech P."/>
            <person name="Watson M."/>
            <person name="Schmidtheini T."/>
            <person name="Reichert B."/>
            <person name="Portetelle D."/>
            <person name="Perez-Alonso M."/>
            <person name="Boutry M."/>
            <person name="Bancroft I."/>
            <person name="Vos P."/>
            <person name="Hoheisel J."/>
            <person name="Zimmermann W."/>
            <person name="Wedler H."/>
            <person name="Ridley P."/>
            <person name="Langham S.-A."/>
            <person name="McCullagh B."/>
            <person name="Bilham L."/>
            <person name="Robben J."/>
            <person name="van der Schueren J."/>
            <person name="Grymonprez B."/>
            <person name="Chuang Y.-J."/>
            <person name="Vandenbussche F."/>
            <person name="Braeken M."/>
            <person name="Weltjens I."/>
            <person name="Voet M."/>
            <person name="Bastiaens I."/>
            <person name="Aert R."/>
            <person name="Defoor E."/>
            <person name="Weitzenegger T."/>
            <person name="Bothe G."/>
            <person name="Ramsperger U."/>
            <person name="Hilbert H."/>
            <person name="Braun M."/>
            <person name="Holzer E."/>
            <person name="Brandt A."/>
            <person name="Peters S."/>
            <person name="van Staveren M."/>
            <person name="Dirkse W."/>
            <person name="Mooijman P."/>
            <person name="Klein Lankhorst R."/>
            <person name="Rose M."/>
            <person name="Hauf J."/>
            <person name="Koetter P."/>
            <person name="Berneiser S."/>
            <person name="Hempel S."/>
            <person name="Feldpausch M."/>
            <person name="Lamberth S."/>
            <person name="Van den Daele H."/>
            <person name="De Keyser A."/>
            <person name="Buysshaert C."/>
            <person name="Gielen J."/>
            <person name="Villarroel R."/>
            <person name="De Clercq R."/>
            <person name="van Montagu M."/>
            <person name="Rogers J."/>
            <person name="Cronin A."/>
            <person name="Quail M.A."/>
            <person name="Bray-Allen S."/>
            <person name="Clark L."/>
            <person name="Doggett J."/>
            <person name="Hall S."/>
            <person name="Kay M."/>
            <person name="Lennard N."/>
            <person name="McLay K."/>
            <person name="Mayes R."/>
            <person name="Pettett A."/>
            <person name="Rajandream M.A."/>
            <person name="Lyne M."/>
            <person name="Benes V."/>
            <person name="Rechmann S."/>
            <person name="Borkova D."/>
            <person name="Bloecker H."/>
            <person name="Scharfe M."/>
            <person name="Grimm M."/>
            <person name="Loehnert T.-H."/>
            <person name="Dose S."/>
            <person name="de Haan M."/>
            <person name="Maarse A.C."/>
            <person name="Schaefer M."/>
            <person name="Mueller-Auer S."/>
            <person name="Gabel C."/>
            <person name="Fuchs M."/>
            <person name="Fartmann B."/>
            <person name="Granderath K."/>
            <person name="Dauner D."/>
            <person name="Herzl A."/>
            <person name="Neumann S."/>
            <person name="Argiriou A."/>
            <person name="Vitale D."/>
            <person name="Liguori R."/>
            <person name="Piravandi E."/>
            <person name="Massenet O."/>
            <person name="Quigley F."/>
            <person name="Clabauld G."/>
            <person name="Muendlein A."/>
            <person name="Felber R."/>
            <person name="Schnabl S."/>
            <person name="Hiller R."/>
            <person name="Schmidt W."/>
            <person name="Lecharny A."/>
            <person name="Aubourg S."/>
            <person name="Chefdor F."/>
            <person name="Cooke R."/>
            <person name="Berger C."/>
            <person name="Monfort A."/>
            <person name="Casacuberta E."/>
            <person name="Gibbons T."/>
            <person name="Weber N."/>
            <person name="Vandenbol M."/>
            <person name="Bargues M."/>
            <person name="Terol J."/>
            <person name="Torres A."/>
            <person name="Perez-Perez A."/>
            <person name="Purnelle B."/>
            <person name="Bent E."/>
            <person name="Johnson S."/>
            <person name="Tacon D."/>
            <person name="Jesse T."/>
            <person name="Heijnen L."/>
            <person name="Schwarz S."/>
            <person name="Scholler P."/>
            <person name="Heber S."/>
            <person name="Francs P."/>
            <person name="Bielke C."/>
            <person name="Frishman D."/>
            <person name="Haase D."/>
            <person name="Lemcke K."/>
            <person name="Mewes H.-W."/>
            <person name="Stocker S."/>
            <person name="Zaccaria P."/>
            <person name="Bevan M."/>
            <person name="Wilson R.K."/>
            <person name="de la Bastide M."/>
            <person name="Habermann K."/>
            <person name="Parnell L."/>
            <person name="Dedhia N."/>
            <person name="Gnoj L."/>
            <person name="Schutz K."/>
            <person name="Huang E."/>
            <person name="Spiegel L."/>
            <person name="Sekhon M."/>
            <person name="Murray J."/>
            <person name="Sheet P."/>
            <person name="Cordes M."/>
            <person name="Abu-Threideh J."/>
            <person name="Stoneking T."/>
            <person name="Kalicki J."/>
            <person name="Graves T."/>
            <person name="Harmon G."/>
            <person name="Edwards J."/>
            <person name="Latreille P."/>
            <person name="Courtney L."/>
            <person name="Cloud J."/>
            <person name="Abbott A."/>
            <person name="Scott K."/>
            <person name="Johnson D."/>
            <person name="Minx P."/>
            <person name="Bentley D."/>
            <person name="Fulton B."/>
            <person name="Miller N."/>
            <person name="Greco T."/>
            <person name="Kemp K."/>
            <person name="Kramer J."/>
            <person name="Fulton L."/>
            <person name="Mardis E."/>
            <person name="Dante M."/>
            <person name="Pepin K."/>
            <person name="Hillier L.W."/>
            <person name="Nelson J."/>
            <person name="Spieth J."/>
            <person name="Ryan E."/>
            <person name="Andrews S."/>
            <person name="Geisel C."/>
            <person name="Layman D."/>
            <person name="Du H."/>
            <person name="Ali J."/>
            <person name="Berghoff A."/>
            <person name="Jones K."/>
            <person name="Drone K."/>
            <person name="Cotton M."/>
            <person name="Joshu C."/>
            <person name="Antonoiu B."/>
            <person name="Zidanic M."/>
            <person name="Strong C."/>
            <person name="Sun H."/>
            <person name="Lamar B."/>
            <person name="Yordan C."/>
            <person name="Ma P."/>
            <person name="Zhong J."/>
            <person name="Preston R."/>
            <person name="Vil D."/>
            <person name="Shekher M."/>
            <person name="Matero A."/>
            <person name="Shah R."/>
            <person name="Swaby I.K."/>
            <person name="O'Shaughnessy A."/>
            <person name="Rodriguez M."/>
            <person name="Hoffman J."/>
            <person name="Till S."/>
            <person name="Granat S."/>
            <person name="Shohdy N."/>
            <person name="Hasegawa A."/>
            <person name="Hameed A."/>
            <person name="Lodhi M."/>
            <person name="Johnson A."/>
            <person name="Chen E."/>
            <person name="Marra M.A."/>
            <person name="Martienssen R."/>
            <person name="McCombie W.R."/>
        </authorList>
    </citation>
    <scope>NUCLEOTIDE SEQUENCE [LARGE SCALE GENOMIC DNA]</scope>
    <source>
        <strain>cv. Columbia</strain>
    </source>
</reference>
<reference key="2">
    <citation type="journal article" date="2017" name="Plant J.">
        <title>Araport11: a complete reannotation of the Arabidopsis thaliana reference genome.</title>
        <authorList>
            <person name="Cheng C.Y."/>
            <person name="Krishnakumar V."/>
            <person name="Chan A.P."/>
            <person name="Thibaud-Nissen F."/>
            <person name="Schobel S."/>
            <person name="Town C.D."/>
        </authorList>
    </citation>
    <scope>GENOME REANNOTATION</scope>
    <source>
        <strain>cv. Columbia</strain>
    </source>
</reference>
<reference key="3">
    <citation type="journal article" date="2003" name="Science">
        <title>Empirical analysis of transcriptional activity in the Arabidopsis genome.</title>
        <authorList>
            <person name="Yamada K."/>
            <person name="Lim J."/>
            <person name="Dale J.M."/>
            <person name="Chen H."/>
            <person name="Shinn P."/>
            <person name="Palm C.J."/>
            <person name="Southwick A.M."/>
            <person name="Wu H.C."/>
            <person name="Kim C.J."/>
            <person name="Nguyen M."/>
            <person name="Pham P.K."/>
            <person name="Cheuk R.F."/>
            <person name="Karlin-Newmann G."/>
            <person name="Liu S.X."/>
            <person name="Lam B."/>
            <person name="Sakano H."/>
            <person name="Wu T."/>
            <person name="Yu G."/>
            <person name="Miranda M."/>
            <person name="Quach H.L."/>
            <person name="Tripp M."/>
            <person name="Chang C.H."/>
            <person name="Lee J.M."/>
            <person name="Toriumi M.J."/>
            <person name="Chan M.M."/>
            <person name="Tang C.C."/>
            <person name="Onodera C.S."/>
            <person name="Deng J.M."/>
            <person name="Akiyama K."/>
            <person name="Ansari Y."/>
            <person name="Arakawa T."/>
            <person name="Banh J."/>
            <person name="Banno F."/>
            <person name="Bowser L."/>
            <person name="Brooks S.Y."/>
            <person name="Carninci P."/>
            <person name="Chao Q."/>
            <person name="Choy N."/>
            <person name="Enju A."/>
            <person name="Goldsmith A.D."/>
            <person name="Gurjal M."/>
            <person name="Hansen N.F."/>
            <person name="Hayashizaki Y."/>
            <person name="Johnson-Hopson C."/>
            <person name="Hsuan V.W."/>
            <person name="Iida K."/>
            <person name="Karnes M."/>
            <person name="Khan S."/>
            <person name="Koesema E."/>
            <person name="Ishida J."/>
            <person name="Jiang P.X."/>
            <person name="Jones T."/>
            <person name="Kawai J."/>
            <person name="Kamiya A."/>
            <person name="Meyers C."/>
            <person name="Nakajima M."/>
            <person name="Narusaka M."/>
            <person name="Seki M."/>
            <person name="Sakurai T."/>
            <person name="Satou M."/>
            <person name="Tamse R."/>
            <person name="Vaysberg M."/>
            <person name="Wallender E.K."/>
            <person name="Wong C."/>
            <person name="Yamamura Y."/>
            <person name="Yuan S."/>
            <person name="Shinozaki K."/>
            <person name="Davis R.W."/>
            <person name="Theologis A."/>
            <person name="Ecker J.R."/>
        </authorList>
    </citation>
    <scope>NUCLEOTIDE SEQUENCE [LARGE SCALE MRNA]</scope>
    <source>
        <strain>cv. Columbia</strain>
    </source>
</reference>
<reference key="4">
    <citation type="submission" date="2006-07" db="EMBL/GenBank/DDBJ databases">
        <title>Large-scale analysis of RIKEN Arabidopsis full-length (RAFL) cDNAs.</title>
        <authorList>
            <person name="Totoki Y."/>
            <person name="Seki M."/>
            <person name="Ishida J."/>
            <person name="Nakajima M."/>
            <person name="Enju A."/>
            <person name="Kamiya A."/>
            <person name="Narusaka M."/>
            <person name="Shin-i T."/>
            <person name="Nakagawa M."/>
            <person name="Sakamoto N."/>
            <person name="Oishi K."/>
            <person name="Kohara Y."/>
            <person name="Kobayashi M."/>
            <person name="Toyoda A."/>
            <person name="Sakaki Y."/>
            <person name="Sakurai T."/>
            <person name="Iida K."/>
            <person name="Akiyama K."/>
            <person name="Satou M."/>
            <person name="Toyoda T."/>
            <person name="Konagaya A."/>
            <person name="Carninci P."/>
            <person name="Kawai J."/>
            <person name="Hayashizaki Y."/>
            <person name="Shinozaki K."/>
        </authorList>
    </citation>
    <scope>NUCLEOTIDE SEQUENCE [LARGE SCALE MRNA]</scope>
    <source>
        <strain>cv. Columbia</strain>
    </source>
</reference>
<reference key="5">
    <citation type="journal article" date="2005" name="Plant Physiol.">
        <title>Genome organization of more than 300 defensin-like genes in Arabidopsis.</title>
        <authorList>
            <person name="Silverstein K.A.T."/>
            <person name="Graham M.A."/>
            <person name="Paape T.D."/>
            <person name="VandenBosch K.A."/>
        </authorList>
    </citation>
    <scope>GENE FAMILY</scope>
</reference>
<comment type="subcellular location">
    <subcellularLocation>
        <location evidence="1">Secreted</location>
    </subcellularLocation>
</comment>
<comment type="similarity">
    <text evidence="3">Belongs to the DEFL family.</text>
</comment>
<comment type="caution">
    <text evidence="3">Contains 7 disulfide bonds instead of the 4 disulfide bonds, which are conserved features of the family.</text>
</comment>
<comment type="sequence caution" evidence="3">
    <conflict type="erroneous gene model prediction">
        <sequence resource="EMBL-CDS" id="CAA16771"/>
    </conflict>
    <text>The predicted gene has been split into 4 genes: At4g22210, At4g22212, At4g22214 and At4g22217.</text>
</comment>
<comment type="sequence caution" evidence="3">
    <conflict type="erroneous gene model prediction">
        <sequence resource="EMBL-CDS" id="CAB79176"/>
    </conflict>
    <text>The predicted gene has been split into 4 genes: At4g22210, At4g22212, At4g22214 and At4g22217.</text>
</comment>
<name>DEF99_ARATH</name>
<keyword id="KW-0929">Antimicrobial</keyword>
<keyword id="KW-1015">Disulfide bond</keyword>
<keyword id="KW-0295">Fungicide</keyword>
<keyword id="KW-0611">Plant defense</keyword>
<keyword id="KW-1185">Reference proteome</keyword>
<keyword id="KW-0964">Secreted</keyword>
<keyword id="KW-0732">Signal</keyword>
<dbReference type="EMBL" id="AL021712">
    <property type="protein sequence ID" value="CAA16771.1"/>
    <property type="status" value="ALT_SEQ"/>
    <property type="molecule type" value="Genomic_DNA"/>
</dbReference>
<dbReference type="EMBL" id="AL161556">
    <property type="protein sequence ID" value="CAB79176.1"/>
    <property type="status" value="ALT_SEQ"/>
    <property type="molecule type" value="Genomic_DNA"/>
</dbReference>
<dbReference type="EMBL" id="CP002687">
    <property type="protein sequence ID" value="AEE84574.1"/>
    <property type="molecule type" value="Genomic_DNA"/>
</dbReference>
<dbReference type="EMBL" id="BT008555">
    <property type="protein sequence ID" value="AAP40382.1"/>
    <property type="molecule type" value="mRNA"/>
</dbReference>
<dbReference type="EMBL" id="BT008666">
    <property type="protein sequence ID" value="AAP40478.1"/>
    <property type="molecule type" value="mRNA"/>
</dbReference>
<dbReference type="EMBL" id="AK229510">
    <property type="protein sequence ID" value="BAF01365.1"/>
    <property type="molecule type" value="mRNA"/>
</dbReference>
<dbReference type="PIR" id="T04902">
    <property type="entry name" value="T04902"/>
</dbReference>
<dbReference type="RefSeq" id="NP_567654.1">
    <property type="nucleotide sequence ID" value="NM_118345.4"/>
</dbReference>
<dbReference type="BioGRID" id="13603">
    <property type="interactions" value="2"/>
</dbReference>
<dbReference type="IntAct" id="Q7X6T3">
    <property type="interactions" value="2"/>
</dbReference>
<dbReference type="STRING" id="3702.Q7X6T3"/>
<dbReference type="PaxDb" id="3702-AT4G22214.1"/>
<dbReference type="EnsemblPlants" id="AT4G22214.1">
    <property type="protein sequence ID" value="AT4G22214.1"/>
    <property type="gene ID" value="AT4G22214"/>
</dbReference>
<dbReference type="GeneID" id="828314"/>
<dbReference type="Gramene" id="AT4G22214.1">
    <property type="protein sequence ID" value="AT4G22214.1"/>
    <property type="gene ID" value="AT4G22214"/>
</dbReference>
<dbReference type="KEGG" id="ath:AT4G22214"/>
<dbReference type="Araport" id="AT4G22214"/>
<dbReference type="TAIR" id="AT4G22214"/>
<dbReference type="HOGENOM" id="CLU_1442911_0_0_1"/>
<dbReference type="InParanoid" id="Q7X6T3"/>
<dbReference type="OrthoDB" id="10268271at2759"/>
<dbReference type="PhylomeDB" id="Q7X6T3"/>
<dbReference type="PRO" id="PR:Q7X6T3"/>
<dbReference type="Proteomes" id="UP000006548">
    <property type="component" value="Chromosome 4"/>
</dbReference>
<dbReference type="ExpressionAtlas" id="Q7X6T3">
    <property type="expression patterns" value="baseline and differential"/>
</dbReference>
<dbReference type="GO" id="GO:0005576">
    <property type="term" value="C:extracellular region"/>
    <property type="evidence" value="ECO:0007669"/>
    <property type="project" value="UniProtKB-SubCell"/>
</dbReference>
<dbReference type="GO" id="GO:0050832">
    <property type="term" value="P:defense response to fungus"/>
    <property type="evidence" value="ECO:0007669"/>
    <property type="project" value="UniProtKB-KW"/>
</dbReference>
<dbReference type="GO" id="GO:0031640">
    <property type="term" value="P:killing of cells of another organism"/>
    <property type="evidence" value="ECO:0007669"/>
    <property type="project" value="UniProtKB-KW"/>
</dbReference>
<accession>Q7X6T3</accession>
<accession>O49626</accession>
<organism>
    <name type="scientific">Arabidopsis thaliana</name>
    <name type="common">Mouse-ear cress</name>
    <dbReference type="NCBI Taxonomy" id="3702"/>
    <lineage>
        <taxon>Eukaryota</taxon>
        <taxon>Viridiplantae</taxon>
        <taxon>Streptophyta</taxon>
        <taxon>Embryophyta</taxon>
        <taxon>Tracheophyta</taxon>
        <taxon>Spermatophyta</taxon>
        <taxon>Magnoliopsida</taxon>
        <taxon>eudicotyledons</taxon>
        <taxon>Gunneridae</taxon>
        <taxon>Pentapetalae</taxon>
        <taxon>rosids</taxon>
        <taxon>malvids</taxon>
        <taxon>Brassicales</taxon>
        <taxon>Brassicaceae</taxon>
        <taxon>Camelineae</taxon>
        <taxon>Arabidopsis</taxon>
    </lineage>
</organism>
<protein>
    <recommendedName>
        <fullName>Defensin-like protein 99</fullName>
    </recommendedName>
</protein>
<sequence length="188" mass="20965">MGSLKLSTVVVTALVVCLSILLISPTEAVEGKLKEECENVPYGFCPFWLFNPRSEELCKEKCKRFKSETSEYYGGFCTPNGPPGGVSLTATCNCCVREKVSPPEIEAVEGKLEVCDNLQIGMCLWYLWPWYDSTKRCEETCQKQNNSPSGARYRYYGGFCTPIVRGTGFFIHGACNCCIRDIKKQASS</sequence>
<evidence type="ECO:0000250" key="1"/>
<evidence type="ECO:0000255" key="2"/>
<evidence type="ECO:0000305" key="3"/>
<proteinExistence type="evidence at transcript level"/>